<sequence>MGFLEDEDQKYWDDVQAVKAWWKDSRWRYTKRPYTAEQIVAKRGNLKIHYPSNDQSKKLWKILESNFEKKVASFTYGCLEPTMLTQMAKYLDTVYVSGWQSSSTASSTDEPSPDLADYPMNTVPNKVNQLFMAQLFHDRKQREERITTPKDQRSKLPNIDYLRPIIADADTGHGGLTAVMKLTKLFIERGAAGIHIEDQAPGTKKCGHMAGKVLVPISEHINRLVAIRAQADIMGTDLLAIARTDSEAATLITSTIDHRDHAFIVGSTNPNLQPLNDLMLAGEQAGKTGEELQAIEDQWIAQAGLKLFDDAVVDTIKAGVHVNKDALIKEYLTAAKGKSNSEARAIAKGITGVDIYWDWDAPRTREGYYRYQGGTQCAINRAVAYAPFADLIWMESKLPDYAQAKEFADGVHAVWPEQKLAYNLSPSFNWKKAMPREEQETYIKRLGALGYAWQFITLAGLHTTALISDQFARAYAKQGMRAYGELVQEPEMEQGVDVVTHQKWSGANYVDNMLKMLTGGVSSTAAMGKGVTEDQFKH</sequence>
<feature type="chain" id="PRO_0000068783" description="Isocitrate lyase">
    <location>
        <begin position="1"/>
        <end position="538"/>
    </location>
</feature>
<feature type="active site" description="Proton acceptor" evidence="3">
    <location>
        <position position="206"/>
    </location>
</feature>
<feature type="binding site" evidence="3">
    <location>
        <begin position="97"/>
        <end position="99"/>
    </location>
    <ligand>
        <name>substrate</name>
    </ligand>
</feature>
<feature type="binding site" evidence="3">
    <location>
        <position position="168"/>
    </location>
    <ligand>
        <name>Mg(2+)</name>
        <dbReference type="ChEBI" id="CHEBI:18420"/>
    </ligand>
</feature>
<feature type="binding site" evidence="3">
    <location>
        <begin position="207"/>
        <end position="208"/>
    </location>
    <ligand>
        <name>substrate</name>
    </ligand>
</feature>
<feature type="binding site" evidence="3">
    <location>
        <position position="243"/>
    </location>
    <ligand>
        <name>substrate</name>
    </ligand>
</feature>
<feature type="binding site" evidence="3">
    <location>
        <begin position="423"/>
        <end position="427"/>
    </location>
    <ligand>
        <name>substrate</name>
    </ligand>
</feature>
<feature type="binding site" evidence="3">
    <location>
        <position position="457"/>
    </location>
    <ligand>
        <name>substrate</name>
    </ligand>
</feature>
<feature type="sequence conflict" description="In Ref. 1." evidence="5" ref="1">
    <original>EK</original>
    <variation>D</variation>
    <location>
        <begin position="68"/>
        <end position="69"/>
    </location>
</feature>
<feature type="sequence conflict" description="In Ref. 1; AAR15146." evidence="5" ref="1">
    <original>G</original>
    <variation>GE</variation>
    <location>
        <position position="235"/>
    </location>
</feature>
<reference key="1">
    <citation type="submission" date="2003-10" db="EMBL/GenBank/DDBJ databases">
        <title>Aspergillus fumigatus isocitrate lyase (icl) gene.</title>
        <authorList>
            <person name="Shankar J."/>
            <person name="Madan T."/>
            <person name="Sarma P.U."/>
        </authorList>
    </citation>
    <scope>NUCLEOTIDE SEQUENCE [GENOMIC DNA]</scope>
</reference>
<reference key="2">
    <citation type="journal article" date="2005" name="Nature">
        <title>Genomic sequence of the pathogenic and allergenic filamentous fungus Aspergillus fumigatus.</title>
        <authorList>
            <person name="Nierman W.C."/>
            <person name="Pain A."/>
            <person name="Anderson M.J."/>
            <person name="Wortman J.R."/>
            <person name="Kim H.S."/>
            <person name="Arroyo J."/>
            <person name="Berriman M."/>
            <person name="Abe K."/>
            <person name="Archer D.B."/>
            <person name="Bermejo C."/>
            <person name="Bennett J.W."/>
            <person name="Bowyer P."/>
            <person name="Chen D."/>
            <person name="Collins M."/>
            <person name="Coulsen R."/>
            <person name="Davies R."/>
            <person name="Dyer P.S."/>
            <person name="Farman M.L."/>
            <person name="Fedorova N."/>
            <person name="Fedorova N.D."/>
            <person name="Feldblyum T.V."/>
            <person name="Fischer R."/>
            <person name="Fosker N."/>
            <person name="Fraser A."/>
            <person name="Garcia J.L."/>
            <person name="Garcia M.J."/>
            <person name="Goble A."/>
            <person name="Goldman G.H."/>
            <person name="Gomi K."/>
            <person name="Griffith-Jones S."/>
            <person name="Gwilliam R."/>
            <person name="Haas B.J."/>
            <person name="Haas H."/>
            <person name="Harris D.E."/>
            <person name="Horiuchi H."/>
            <person name="Huang J."/>
            <person name="Humphray S."/>
            <person name="Jimenez J."/>
            <person name="Keller N."/>
            <person name="Khouri H."/>
            <person name="Kitamoto K."/>
            <person name="Kobayashi T."/>
            <person name="Konzack S."/>
            <person name="Kulkarni R."/>
            <person name="Kumagai T."/>
            <person name="Lafton A."/>
            <person name="Latge J.-P."/>
            <person name="Li W."/>
            <person name="Lord A."/>
            <person name="Lu C."/>
            <person name="Majoros W.H."/>
            <person name="May G.S."/>
            <person name="Miller B.L."/>
            <person name="Mohamoud Y."/>
            <person name="Molina M."/>
            <person name="Monod M."/>
            <person name="Mouyna I."/>
            <person name="Mulligan S."/>
            <person name="Murphy L.D."/>
            <person name="O'Neil S."/>
            <person name="Paulsen I."/>
            <person name="Penalva M.A."/>
            <person name="Pertea M."/>
            <person name="Price C."/>
            <person name="Pritchard B.L."/>
            <person name="Quail M.A."/>
            <person name="Rabbinowitsch E."/>
            <person name="Rawlins N."/>
            <person name="Rajandream M.A."/>
            <person name="Reichard U."/>
            <person name="Renauld H."/>
            <person name="Robson G.D."/>
            <person name="Rodriguez de Cordoba S."/>
            <person name="Rodriguez-Pena J.M."/>
            <person name="Ronning C.M."/>
            <person name="Rutter S."/>
            <person name="Salzberg S.L."/>
            <person name="Sanchez M."/>
            <person name="Sanchez-Ferrero J.C."/>
            <person name="Saunders D."/>
            <person name="Seeger K."/>
            <person name="Squares R."/>
            <person name="Squares S."/>
            <person name="Takeuchi M."/>
            <person name="Tekaia F."/>
            <person name="Turner G."/>
            <person name="Vazquez de Aldana C.R."/>
            <person name="Weidman J."/>
            <person name="White O."/>
            <person name="Woodward J.R."/>
            <person name="Yu J.-H."/>
            <person name="Fraser C.M."/>
            <person name="Galagan J.E."/>
            <person name="Asai K."/>
            <person name="Machida M."/>
            <person name="Hall N."/>
            <person name="Barrell B.G."/>
            <person name="Denning D.W."/>
        </authorList>
    </citation>
    <scope>NUCLEOTIDE SEQUENCE [LARGE SCALE GENOMIC DNA]</scope>
    <source>
        <strain>ATCC MYA-4609 / CBS 101355 / FGSC A1100 / Af293</strain>
    </source>
</reference>
<organism>
    <name type="scientific">Aspergillus fumigatus (strain ATCC MYA-4609 / CBS 101355 / FGSC A1100 / Af293)</name>
    <name type="common">Neosartorya fumigata</name>
    <dbReference type="NCBI Taxonomy" id="330879"/>
    <lineage>
        <taxon>Eukaryota</taxon>
        <taxon>Fungi</taxon>
        <taxon>Dikarya</taxon>
        <taxon>Ascomycota</taxon>
        <taxon>Pezizomycotina</taxon>
        <taxon>Eurotiomycetes</taxon>
        <taxon>Eurotiomycetidae</taxon>
        <taxon>Eurotiales</taxon>
        <taxon>Aspergillaceae</taxon>
        <taxon>Aspergillus</taxon>
        <taxon>Aspergillus subgen. Fumigati</taxon>
    </lineage>
</organism>
<keyword id="KW-0329">Glyoxylate bypass</keyword>
<keyword id="KW-0330">Glyoxysome</keyword>
<keyword id="KW-0456">Lyase</keyword>
<keyword id="KW-0460">Magnesium</keyword>
<keyword id="KW-0479">Metal-binding</keyword>
<keyword id="KW-0576">Peroxisome</keyword>
<keyword id="KW-1185">Reference proteome</keyword>
<keyword id="KW-0816">Tricarboxylic acid cycle</keyword>
<evidence type="ECO:0000250" key="1">
    <source>
        <dbReference type="UniProtKB" id="P28240"/>
    </source>
</evidence>
<evidence type="ECO:0000250" key="2">
    <source>
        <dbReference type="UniProtKB" id="P28299"/>
    </source>
</evidence>
<evidence type="ECO:0000250" key="3">
    <source>
        <dbReference type="UniProtKB" id="P9WKK7"/>
    </source>
</evidence>
<evidence type="ECO:0000303" key="4">
    <source ref="1"/>
</evidence>
<evidence type="ECO:0000305" key="5"/>
<proteinExistence type="inferred from homology"/>
<comment type="function">
    <text evidence="1">Catalyzes the formation of succinate and glyoxylate from isocitrate, a key step of the glyoxylate cycle, which operates as an anaplerotic route for replenishing the tricarboxylic acid cycle. Required for growth on ethanol or acetate, but dispensable when fermentable carbon sources are available. Also acts on 2-methylisocitrate.</text>
</comment>
<comment type="catalytic activity">
    <reaction evidence="1">
        <text>D-threo-isocitrate = glyoxylate + succinate</text>
        <dbReference type="Rhea" id="RHEA:13245"/>
        <dbReference type="ChEBI" id="CHEBI:15562"/>
        <dbReference type="ChEBI" id="CHEBI:30031"/>
        <dbReference type="ChEBI" id="CHEBI:36655"/>
        <dbReference type="EC" id="4.1.3.1"/>
    </reaction>
</comment>
<comment type="catalytic activity">
    <reaction evidence="1">
        <text>(2S,3R)-3-hydroxybutane-1,2,3-tricarboxylate = pyruvate + succinate</text>
        <dbReference type="Rhea" id="RHEA:16809"/>
        <dbReference type="ChEBI" id="CHEBI:15361"/>
        <dbReference type="ChEBI" id="CHEBI:30031"/>
        <dbReference type="ChEBI" id="CHEBI:57429"/>
        <dbReference type="EC" id="4.1.3.30"/>
    </reaction>
</comment>
<comment type="cofactor">
    <cofactor evidence="3">
        <name>Mg(2+)</name>
        <dbReference type="ChEBI" id="CHEBI:18420"/>
    </cofactor>
</comment>
<comment type="pathway">
    <text>Carbohydrate metabolism; glyoxylate cycle; (S)-malate from isocitrate: step 1/2.</text>
</comment>
<comment type="subunit">
    <text evidence="1">Homotetramer.</text>
</comment>
<comment type="subcellular location">
    <subcellularLocation>
        <location evidence="2">Glyoxysome</location>
    </subcellularLocation>
</comment>
<comment type="similarity">
    <text evidence="5">Belongs to the isocitrate lyase/PEP mutase superfamily. Isocitrate lyase family.</text>
</comment>
<dbReference type="EC" id="4.1.3.1" evidence="1"/>
<dbReference type="EC" id="4.1.3.30" evidence="1"/>
<dbReference type="EMBL" id="AY442291">
    <property type="protein sequence ID" value="AAR15146.1"/>
    <property type="molecule type" value="Genomic_DNA"/>
</dbReference>
<dbReference type="EMBL" id="AAHF01000005">
    <property type="protein sequence ID" value="EAL89442.1"/>
    <property type="molecule type" value="Genomic_DNA"/>
</dbReference>
<dbReference type="RefSeq" id="XP_751480.1">
    <property type="nucleotide sequence ID" value="XM_746387.1"/>
</dbReference>
<dbReference type="SMR" id="Q6T267"/>
<dbReference type="FunCoup" id="Q6T267">
    <property type="interactions" value="163"/>
</dbReference>
<dbReference type="STRING" id="330879.Q6T267"/>
<dbReference type="EnsemblFungi" id="EAL89442">
    <property type="protein sequence ID" value="EAL89442"/>
    <property type="gene ID" value="AFUA_4G13510"/>
</dbReference>
<dbReference type="GeneID" id="3509073"/>
<dbReference type="KEGG" id="afm:AFUA_4G13510"/>
<dbReference type="VEuPathDB" id="FungiDB:Afu4g13510"/>
<dbReference type="eggNOG" id="KOG1260">
    <property type="taxonomic scope" value="Eukaryota"/>
</dbReference>
<dbReference type="HOGENOM" id="CLU_019214_2_2_1"/>
<dbReference type="InParanoid" id="Q6T267"/>
<dbReference type="OMA" id="YVSGWQV"/>
<dbReference type="OrthoDB" id="4078635at2759"/>
<dbReference type="UniPathway" id="UPA00703">
    <property type="reaction ID" value="UER00719"/>
</dbReference>
<dbReference type="Proteomes" id="UP000002530">
    <property type="component" value="Chromosome 4"/>
</dbReference>
<dbReference type="GO" id="GO:0009514">
    <property type="term" value="C:glyoxysome"/>
    <property type="evidence" value="ECO:0007669"/>
    <property type="project" value="UniProtKB-SubCell"/>
</dbReference>
<dbReference type="GO" id="GO:0004451">
    <property type="term" value="F:isocitrate lyase activity"/>
    <property type="evidence" value="ECO:0000314"/>
    <property type="project" value="AspGD"/>
</dbReference>
<dbReference type="GO" id="GO:0046872">
    <property type="term" value="F:metal ion binding"/>
    <property type="evidence" value="ECO:0007669"/>
    <property type="project" value="UniProtKB-KW"/>
</dbReference>
<dbReference type="GO" id="GO:0046421">
    <property type="term" value="F:methylisocitrate lyase activity"/>
    <property type="evidence" value="ECO:0007669"/>
    <property type="project" value="UniProtKB-EC"/>
</dbReference>
<dbReference type="GO" id="GO:0006097">
    <property type="term" value="P:glyoxylate cycle"/>
    <property type="evidence" value="ECO:0007669"/>
    <property type="project" value="UniProtKB-UniPathway"/>
</dbReference>
<dbReference type="GO" id="GO:0006099">
    <property type="term" value="P:tricarboxylic acid cycle"/>
    <property type="evidence" value="ECO:0007669"/>
    <property type="project" value="UniProtKB-KW"/>
</dbReference>
<dbReference type="FunFam" id="1.10.10.850:FF:000001">
    <property type="entry name" value="Isocitrate lyase"/>
    <property type="match status" value="1"/>
</dbReference>
<dbReference type="Gene3D" id="1.10.10.850">
    <property type="match status" value="1"/>
</dbReference>
<dbReference type="Gene3D" id="3.20.20.60">
    <property type="entry name" value="Phosphoenolpyruvate-binding domains"/>
    <property type="match status" value="1"/>
</dbReference>
<dbReference type="InterPro" id="IPR006254">
    <property type="entry name" value="Isocitrate_lyase"/>
</dbReference>
<dbReference type="InterPro" id="IPR018523">
    <property type="entry name" value="Isocitrate_lyase_ph_CS"/>
</dbReference>
<dbReference type="InterPro" id="IPR015813">
    <property type="entry name" value="Pyrv/PenolPyrv_kinase-like_dom"/>
</dbReference>
<dbReference type="InterPro" id="IPR040442">
    <property type="entry name" value="Pyrv_kinase-like_dom_sf"/>
</dbReference>
<dbReference type="NCBIfam" id="TIGR01346">
    <property type="entry name" value="isocit_lyase"/>
    <property type="match status" value="1"/>
</dbReference>
<dbReference type="PANTHER" id="PTHR21631:SF3">
    <property type="entry name" value="BIFUNCTIONAL GLYOXYLATE CYCLE PROTEIN"/>
    <property type="match status" value="1"/>
</dbReference>
<dbReference type="PANTHER" id="PTHR21631">
    <property type="entry name" value="ISOCITRATE LYASE/MALATE SYNTHASE"/>
    <property type="match status" value="1"/>
</dbReference>
<dbReference type="Pfam" id="PF00463">
    <property type="entry name" value="ICL"/>
    <property type="match status" value="1"/>
</dbReference>
<dbReference type="PIRSF" id="PIRSF001362">
    <property type="entry name" value="Isocit_lyase"/>
    <property type="match status" value="1"/>
</dbReference>
<dbReference type="SUPFAM" id="SSF51621">
    <property type="entry name" value="Phosphoenolpyruvate/pyruvate domain"/>
    <property type="match status" value="1"/>
</dbReference>
<dbReference type="PROSITE" id="PS00161">
    <property type="entry name" value="ISOCITRATE_LYASE"/>
    <property type="match status" value="1"/>
</dbReference>
<name>ACEA_ASPFU</name>
<accession>Q6T267</accession>
<accession>Q4WQP2</accession>
<gene>
    <name evidence="1" type="primary">icl1</name>
    <name evidence="4" type="synonym">icl</name>
    <name type="ORF">AFUA_4G13510</name>
</gene>
<protein>
    <recommendedName>
        <fullName evidence="1">Isocitrate lyase</fullName>
        <shortName evidence="5">ICL</shortName>
        <shortName evidence="5">Isocitrase</shortName>
        <shortName evidence="5">Isocitratase</shortName>
        <ecNumber evidence="1">4.1.3.1</ecNumber>
    </recommendedName>
    <alternativeName>
        <fullName evidence="1">Methylisocitrate lyase</fullName>
        <shortName evidence="5">MICA</shortName>
        <ecNumber evidence="1">4.1.3.30</ecNumber>
    </alternativeName>
    <alternativeName>
        <fullName evidence="5">Threo-D(S)-isocitrate glyoxylate-lyase</fullName>
    </alternativeName>
</protein>